<evidence type="ECO:0000250" key="1">
    <source>
        <dbReference type="UniProtKB" id="P39722"/>
    </source>
</evidence>
<evidence type="ECO:0000255" key="2"/>
<evidence type="ECO:0000255" key="3">
    <source>
        <dbReference type="PROSITE-ProRule" id="PRU00448"/>
    </source>
</evidence>
<evidence type="ECO:0000255" key="4">
    <source>
        <dbReference type="PROSITE-ProRule" id="PRU00757"/>
    </source>
</evidence>
<evidence type="ECO:0000305" key="5"/>
<reference key="1">
    <citation type="journal article" date="2005" name="Science">
        <title>The genome of the basidiomycetous yeast and human pathogen Cryptococcus neoformans.</title>
        <authorList>
            <person name="Loftus B.J."/>
            <person name="Fung E."/>
            <person name="Roncaglia P."/>
            <person name="Rowley D."/>
            <person name="Amedeo P."/>
            <person name="Bruno D."/>
            <person name="Vamathevan J."/>
            <person name="Miranda M."/>
            <person name="Anderson I.J."/>
            <person name="Fraser J.A."/>
            <person name="Allen J.E."/>
            <person name="Bosdet I.E."/>
            <person name="Brent M.R."/>
            <person name="Chiu R."/>
            <person name="Doering T.L."/>
            <person name="Donlin M.J."/>
            <person name="D'Souza C.A."/>
            <person name="Fox D.S."/>
            <person name="Grinberg V."/>
            <person name="Fu J."/>
            <person name="Fukushima M."/>
            <person name="Haas B.J."/>
            <person name="Huang J.C."/>
            <person name="Janbon G."/>
            <person name="Jones S.J.M."/>
            <person name="Koo H.L."/>
            <person name="Krzywinski M.I."/>
            <person name="Kwon-Chung K.J."/>
            <person name="Lengeler K.B."/>
            <person name="Maiti R."/>
            <person name="Marra M.A."/>
            <person name="Marra R.E."/>
            <person name="Mathewson C.A."/>
            <person name="Mitchell T.G."/>
            <person name="Pertea M."/>
            <person name="Riggs F.R."/>
            <person name="Salzberg S.L."/>
            <person name="Schein J.E."/>
            <person name="Shvartsbeyn A."/>
            <person name="Shin H."/>
            <person name="Shumway M."/>
            <person name="Specht C.A."/>
            <person name="Suh B.B."/>
            <person name="Tenney A."/>
            <person name="Utterback T.R."/>
            <person name="Wickes B.L."/>
            <person name="Wortman J.R."/>
            <person name="Wye N.H."/>
            <person name="Kronstad J.W."/>
            <person name="Lodge J.K."/>
            <person name="Heitman J."/>
            <person name="Davis R.W."/>
            <person name="Fraser C.M."/>
            <person name="Hyman R.W."/>
        </authorList>
    </citation>
    <scope>NUCLEOTIDE SEQUENCE [LARGE SCALE GENOMIC DNA]</scope>
    <source>
        <strain>JEC21 / ATCC MYA-565</strain>
    </source>
</reference>
<protein>
    <recommendedName>
        <fullName>Mitochondrial Rho GTPase 1</fullName>
        <ecNumber>3.6.5.-</ecNumber>
    </recommendedName>
    <alternativeName>
        <fullName>GTPase EF-hand protein of mitochondria 1</fullName>
    </alternativeName>
</protein>
<sequence length="686" mass="76887">MPRRDLVRIVLVGDDGVGKSSIITSLIKEAFVTNVPHVVPEVTIPPEITPENFTTSIVDTSSNPRSRPHLLSSISRAHVICLVYSIADPSSFDRVAEYWLPLFRREGINVPVILVGNKIDLRGGRVTNQGLEDESAPIMREFKEVETVVECSALLPLNVSEVFYFAQKAVLHPTAPLYDSREHTLKPKCLEALKRIFTISDVDKDGLLNAHELNQFQQKCFSTPLQSQELDGILEIVRSYDPYAVQPLPSSSPNTPLSRDSSYGQLHYFNNNVVPPSPPQEGITELGFLYLHTMFIQQGRMETTWTVLRKFGYGESLDLREDFLAPKFDVPSDCSVELSPLGNQFLTDIFEAYDKDQDGALSQNELDDLFSTSPGNPWLSQGFPDTTITDDMGRVTLQGWLAQWSMTTLLNHRTTLNYLAYLGYSSSPATDLPTPTALHVTRPRKQDRRQRKVTRNVFLCYVLGATGSGKTSLLRSFVNRPFKGGEDGLGGYEPTTKVLSVVNSVEMEGVEKYLVLQEFGSKYESEILRNSKRLDMADIIIYVHDSSDTNSFSYISNLRQQYSLDHIPSIFVATKSDLDLAQQRHEVQPDVYCRRLGLQAPMAVSSRLGPLHNLWVAITRVALDPTSSLPRGPRSQMSPAQRIRVVARWGLAATTISAIVAVWMKWQGYSFKGIWGWMAKFAGLRT</sequence>
<comment type="function">
    <text evidence="1">Mitochondrial GTPase involved in mitochondrial trafficking. Probably involved in control of anterograde transport of mitochondria and their subcellular distribution.</text>
</comment>
<comment type="subcellular location">
    <subcellularLocation>
        <location evidence="1">Mitochondrion outer membrane</location>
        <topology evidence="1">Single-pass type IV membrane protein</topology>
    </subcellularLocation>
</comment>
<comment type="similarity">
    <text evidence="4 5">Belongs to the mitochondrial Rho GTPase family.</text>
</comment>
<keyword id="KW-0106">Calcium</keyword>
<keyword id="KW-0342">GTP-binding</keyword>
<keyword id="KW-0378">Hydrolase</keyword>
<keyword id="KW-0472">Membrane</keyword>
<keyword id="KW-0479">Metal-binding</keyword>
<keyword id="KW-0496">Mitochondrion</keyword>
<keyword id="KW-1000">Mitochondrion outer membrane</keyword>
<keyword id="KW-0547">Nucleotide-binding</keyword>
<keyword id="KW-1185">Reference proteome</keyword>
<keyword id="KW-0677">Repeat</keyword>
<keyword id="KW-0812">Transmembrane</keyword>
<keyword id="KW-1133">Transmembrane helix</keyword>
<dbReference type="EC" id="3.6.5.-"/>
<dbReference type="EMBL" id="AE017346">
    <property type="protein sequence ID" value="AAW44051.2"/>
    <property type="molecule type" value="Genomic_DNA"/>
</dbReference>
<dbReference type="RefSeq" id="XP_571358.1">
    <property type="nucleotide sequence ID" value="XM_571358.1"/>
</dbReference>
<dbReference type="SMR" id="P0CO78"/>
<dbReference type="FunCoup" id="P0CO78">
    <property type="interactions" value="349"/>
</dbReference>
<dbReference type="STRING" id="214684.P0CO78"/>
<dbReference type="PaxDb" id="214684-P0CO78"/>
<dbReference type="EnsemblFungi" id="AAW44051">
    <property type="protein sequence ID" value="AAW44051"/>
    <property type="gene ID" value="CNF03990"/>
</dbReference>
<dbReference type="VEuPathDB" id="FungiDB:CNF03990"/>
<dbReference type="eggNOG" id="KOG1707">
    <property type="taxonomic scope" value="Eukaryota"/>
</dbReference>
<dbReference type="InParanoid" id="P0CO78"/>
<dbReference type="OrthoDB" id="10020961at2759"/>
<dbReference type="Proteomes" id="UP000002149">
    <property type="component" value="Chromosome 6"/>
</dbReference>
<dbReference type="GO" id="GO:0032865">
    <property type="term" value="C:ERMES complex"/>
    <property type="evidence" value="ECO:0007669"/>
    <property type="project" value="EnsemblFungi"/>
</dbReference>
<dbReference type="GO" id="GO:0005741">
    <property type="term" value="C:mitochondrial outer membrane"/>
    <property type="evidence" value="ECO:0000318"/>
    <property type="project" value="GO_Central"/>
</dbReference>
<dbReference type="GO" id="GO:0005509">
    <property type="term" value="F:calcium ion binding"/>
    <property type="evidence" value="ECO:0007669"/>
    <property type="project" value="EnsemblFungi"/>
</dbReference>
<dbReference type="GO" id="GO:0005525">
    <property type="term" value="F:GTP binding"/>
    <property type="evidence" value="ECO:0000318"/>
    <property type="project" value="GO_Central"/>
</dbReference>
<dbReference type="GO" id="GO:0003924">
    <property type="term" value="F:GTPase activity"/>
    <property type="evidence" value="ECO:0000318"/>
    <property type="project" value="GO_Central"/>
</dbReference>
<dbReference type="GO" id="GO:0015886">
    <property type="term" value="P:heme transport"/>
    <property type="evidence" value="ECO:0007669"/>
    <property type="project" value="EnsemblFungi"/>
</dbReference>
<dbReference type="GO" id="GO:0000001">
    <property type="term" value="P:mitochondrion inheritance"/>
    <property type="evidence" value="ECO:0007669"/>
    <property type="project" value="EnsemblFungi"/>
</dbReference>
<dbReference type="GO" id="GO:0007005">
    <property type="term" value="P:mitochondrion organization"/>
    <property type="evidence" value="ECO:0000318"/>
    <property type="project" value="GO_Central"/>
</dbReference>
<dbReference type="GO" id="GO:1990456">
    <property type="term" value="P:mitochondrion-endoplasmic reticulum membrane tethering"/>
    <property type="evidence" value="ECO:0007669"/>
    <property type="project" value="EnsemblFungi"/>
</dbReference>
<dbReference type="GO" id="GO:0055091">
    <property type="term" value="P:phospholipid homeostasis"/>
    <property type="evidence" value="ECO:0007669"/>
    <property type="project" value="EnsemblFungi"/>
</dbReference>
<dbReference type="GO" id="GO:0010821">
    <property type="term" value="P:regulation of mitochondrion organization"/>
    <property type="evidence" value="ECO:0007669"/>
    <property type="project" value="EnsemblFungi"/>
</dbReference>
<dbReference type="CDD" id="cd01893">
    <property type="entry name" value="Miro1"/>
    <property type="match status" value="1"/>
</dbReference>
<dbReference type="CDD" id="cd01892">
    <property type="entry name" value="Miro2"/>
    <property type="match status" value="1"/>
</dbReference>
<dbReference type="FunFam" id="3.40.50.300:FF:000553">
    <property type="entry name" value="Mitochondrial Rho GTPase"/>
    <property type="match status" value="1"/>
</dbReference>
<dbReference type="FunFam" id="1.10.238.10:FF:000277">
    <property type="entry name" value="Mitochondrial Rho GTPase 1"/>
    <property type="match status" value="1"/>
</dbReference>
<dbReference type="FunFam" id="3.40.50.300:FF:001330">
    <property type="entry name" value="Mitochondrial Rho GTPase 1"/>
    <property type="match status" value="1"/>
</dbReference>
<dbReference type="Gene3D" id="1.10.238.10">
    <property type="entry name" value="EF-hand"/>
    <property type="match status" value="2"/>
</dbReference>
<dbReference type="Gene3D" id="3.40.50.300">
    <property type="entry name" value="P-loop containing nucleotide triphosphate hydrolases"/>
    <property type="match status" value="2"/>
</dbReference>
<dbReference type="InterPro" id="IPR011992">
    <property type="entry name" value="EF-hand-dom_pair"/>
</dbReference>
<dbReference type="InterPro" id="IPR018247">
    <property type="entry name" value="EF_Hand_1_Ca_BS"/>
</dbReference>
<dbReference type="InterPro" id="IPR013566">
    <property type="entry name" value="EF_hand_assoc_1"/>
</dbReference>
<dbReference type="InterPro" id="IPR013567">
    <property type="entry name" value="EF_hand_assoc_2"/>
</dbReference>
<dbReference type="InterPro" id="IPR002048">
    <property type="entry name" value="EF_hand_dom"/>
</dbReference>
<dbReference type="InterPro" id="IPR021181">
    <property type="entry name" value="Miro"/>
</dbReference>
<dbReference type="InterPro" id="IPR052266">
    <property type="entry name" value="Miro-EF-hand_domain"/>
</dbReference>
<dbReference type="InterPro" id="IPR020860">
    <property type="entry name" value="MIRO_dom"/>
</dbReference>
<dbReference type="InterPro" id="IPR027417">
    <property type="entry name" value="P-loop_NTPase"/>
</dbReference>
<dbReference type="InterPro" id="IPR001806">
    <property type="entry name" value="Small_GTPase"/>
</dbReference>
<dbReference type="PANTHER" id="PTHR46819">
    <property type="entry name" value="EF-HAND CALCIUM-BINDING DOMAIN-CONTAINING PROTEIN 7"/>
    <property type="match status" value="1"/>
</dbReference>
<dbReference type="PANTHER" id="PTHR46819:SF1">
    <property type="entry name" value="EF-HAND CALCIUM-BINDING DOMAIN-CONTAINING PROTEIN 7"/>
    <property type="match status" value="1"/>
</dbReference>
<dbReference type="Pfam" id="PF08355">
    <property type="entry name" value="EF_assoc_1"/>
    <property type="match status" value="1"/>
</dbReference>
<dbReference type="Pfam" id="PF08356">
    <property type="entry name" value="EF_assoc_2"/>
    <property type="match status" value="1"/>
</dbReference>
<dbReference type="Pfam" id="PF00071">
    <property type="entry name" value="Ras"/>
    <property type="match status" value="2"/>
</dbReference>
<dbReference type="PIRSF" id="PIRSF037488">
    <property type="entry name" value="Mt_Rho_GTPase"/>
    <property type="match status" value="1"/>
</dbReference>
<dbReference type="PRINTS" id="PR00449">
    <property type="entry name" value="RASTRNSFRMNG"/>
</dbReference>
<dbReference type="SMART" id="SM00054">
    <property type="entry name" value="EFh"/>
    <property type="match status" value="2"/>
</dbReference>
<dbReference type="SMART" id="SM00175">
    <property type="entry name" value="RAB"/>
    <property type="match status" value="1"/>
</dbReference>
<dbReference type="SMART" id="SM00173">
    <property type="entry name" value="RAS"/>
    <property type="match status" value="1"/>
</dbReference>
<dbReference type="SMART" id="SM00174">
    <property type="entry name" value="RHO"/>
    <property type="match status" value="1"/>
</dbReference>
<dbReference type="SUPFAM" id="SSF47473">
    <property type="entry name" value="EF-hand"/>
    <property type="match status" value="1"/>
</dbReference>
<dbReference type="SUPFAM" id="SSF52540">
    <property type="entry name" value="P-loop containing nucleoside triphosphate hydrolases"/>
    <property type="match status" value="2"/>
</dbReference>
<dbReference type="PROSITE" id="PS00018">
    <property type="entry name" value="EF_HAND_1"/>
    <property type="match status" value="2"/>
</dbReference>
<dbReference type="PROSITE" id="PS50222">
    <property type="entry name" value="EF_HAND_2"/>
    <property type="match status" value="2"/>
</dbReference>
<dbReference type="PROSITE" id="PS51423">
    <property type="entry name" value="MIRO"/>
    <property type="match status" value="2"/>
</dbReference>
<feature type="chain" id="PRO_0000239334" description="Mitochondrial Rho GTPase 1">
    <location>
        <begin position="1"/>
        <end position="686"/>
    </location>
</feature>
<feature type="topological domain" description="Cytoplasmic" evidence="2">
    <location>
        <begin position="1"/>
        <end position="648"/>
    </location>
</feature>
<feature type="transmembrane region" description="Helical; Anchor for type IV membrane protein" evidence="2">
    <location>
        <begin position="649"/>
        <end position="665"/>
    </location>
</feature>
<feature type="topological domain" description="Mitochondrial intermembrane" evidence="2">
    <location>
        <begin position="666"/>
        <end position="686"/>
    </location>
</feature>
<feature type="domain" description="Miro 1" evidence="4">
    <location>
        <begin position="4"/>
        <end position="172"/>
    </location>
</feature>
<feature type="domain" description="EF-hand 1" evidence="3">
    <location>
        <begin position="188"/>
        <end position="223"/>
    </location>
</feature>
<feature type="domain" description="EF-hand 2" evidence="3">
    <location>
        <begin position="341"/>
        <end position="376"/>
    </location>
</feature>
<feature type="domain" description="Miro 2" evidence="4">
    <location>
        <begin position="455"/>
        <end position="624"/>
    </location>
</feature>
<feature type="binding site" evidence="2">
    <location>
        <begin position="13"/>
        <end position="20"/>
    </location>
    <ligand>
        <name>GTP</name>
        <dbReference type="ChEBI" id="CHEBI:37565"/>
        <label>1</label>
    </ligand>
</feature>
<feature type="binding site" evidence="2">
    <location>
        <begin position="59"/>
        <end position="63"/>
    </location>
    <ligand>
        <name>GTP</name>
        <dbReference type="ChEBI" id="CHEBI:37565"/>
        <label>1</label>
    </ligand>
</feature>
<feature type="binding site" evidence="2">
    <location>
        <begin position="117"/>
        <end position="120"/>
    </location>
    <ligand>
        <name>GTP</name>
        <dbReference type="ChEBI" id="CHEBI:37565"/>
        <label>1</label>
    </ligand>
</feature>
<feature type="binding site" evidence="3">
    <location>
        <position position="201"/>
    </location>
    <ligand>
        <name>Ca(2+)</name>
        <dbReference type="ChEBI" id="CHEBI:29108"/>
        <label>1</label>
    </ligand>
</feature>
<feature type="binding site" evidence="3">
    <location>
        <position position="203"/>
    </location>
    <ligand>
        <name>Ca(2+)</name>
        <dbReference type="ChEBI" id="CHEBI:29108"/>
        <label>1</label>
    </ligand>
</feature>
<feature type="binding site" evidence="3">
    <location>
        <position position="205"/>
    </location>
    <ligand>
        <name>Ca(2+)</name>
        <dbReference type="ChEBI" id="CHEBI:29108"/>
        <label>1</label>
    </ligand>
</feature>
<feature type="binding site" evidence="3">
    <location>
        <position position="212"/>
    </location>
    <ligand>
        <name>Ca(2+)</name>
        <dbReference type="ChEBI" id="CHEBI:29108"/>
        <label>1</label>
    </ligand>
</feature>
<feature type="binding site" evidence="3">
    <location>
        <position position="354"/>
    </location>
    <ligand>
        <name>Ca(2+)</name>
        <dbReference type="ChEBI" id="CHEBI:29108"/>
        <label>2</label>
    </ligand>
</feature>
<feature type="binding site" evidence="3">
    <location>
        <position position="356"/>
    </location>
    <ligand>
        <name>Ca(2+)</name>
        <dbReference type="ChEBI" id="CHEBI:29108"/>
        <label>2</label>
    </ligand>
</feature>
<feature type="binding site" evidence="3">
    <location>
        <position position="358"/>
    </location>
    <ligand>
        <name>Ca(2+)</name>
        <dbReference type="ChEBI" id="CHEBI:29108"/>
        <label>2</label>
    </ligand>
</feature>
<feature type="binding site" evidence="3">
    <location>
        <position position="365"/>
    </location>
    <ligand>
        <name>Ca(2+)</name>
        <dbReference type="ChEBI" id="CHEBI:29108"/>
        <label>2</label>
    </ligand>
</feature>
<feature type="binding site" evidence="2">
    <location>
        <begin position="464"/>
        <end position="471"/>
    </location>
    <ligand>
        <name>GTP</name>
        <dbReference type="ChEBI" id="CHEBI:37565"/>
        <label>2</label>
    </ligand>
</feature>
<feature type="binding site" evidence="2">
    <location>
        <begin position="506"/>
        <end position="510"/>
    </location>
    <ligand>
        <name>GTP</name>
        <dbReference type="ChEBI" id="CHEBI:37565"/>
        <label>2</label>
    </ligand>
</feature>
<feature type="binding site" evidence="2">
    <location>
        <begin position="574"/>
        <end position="577"/>
    </location>
    <ligand>
        <name>GTP</name>
        <dbReference type="ChEBI" id="CHEBI:37565"/>
        <label>2</label>
    </ligand>
</feature>
<name>GEM1_CRYNJ</name>
<accession>P0CO78</accession>
<accession>Q55RA5</accession>
<accession>Q5KEW5</accession>
<proteinExistence type="inferred from homology"/>
<gene>
    <name type="primary">GEM1</name>
    <name type="ordered locus">CNF03990</name>
</gene>
<organism>
    <name type="scientific">Cryptococcus neoformans var. neoformans serotype D (strain JEC21 / ATCC MYA-565)</name>
    <name type="common">Filobasidiella neoformans</name>
    <dbReference type="NCBI Taxonomy" id="214684"/>
    <lineage>
        <taxon>Eukaryota</taxon>
        <taxon>Fungi</taxon>
        <taxon>Dikarya</taxon>
        <taxon>Basidiomycota</taxon>
        <taxon>Agaricomycotina</taxon>
        <taxon>Tremellomycetes</taxon>
        <taxon>Tremellales</taxon>
        <taxon>Cryptococcaceae</taxon>
        <taxon>Cryptococcus</taxon>
        <taxon>Cryptococcus neoformans species complex</taxon>
    </lineage>
</organism>